<dbReference type="EC" id="2.3.1.234" evidence="1"/>
<dbReference type="EMBL" id="AE004969">
    <property type="protein sequence ID" value="AAW88865.1"/>
    <property type="molecule type" value="Genomic_DNA"/>
</dbReference>
<dbReference type="RefSeq" id="WP_003687363.1">
    <property type="nucleotide sequence ID" value="NC_002946.2"/>
</dbReference>
<dbReference type="RefSeq" id="YP_207277.1">
    <property type="nucleotide sequence ID" value="NC_002946.2"/>
</dbReference>
<dbReference type="SMR" id="Q5FAC2"/>
<dbReference type="STRING" id="242231.NGO_0104"/>
<dbReference type="GeneID" id="66752370"/>
<dbReference type="KEGG" id="ngo:NGO_0104"/>
<dbReference type="PATRIC" id="fig|242231.10.peg.137"/>
<dbReference type="HOGENOM" id="CLU_023208_0_2_4"/>
<dbReference type="Proteomes" id="UP000000535">
    <property type="component" value="Chromosome"/>
</dbReference>
<dbReference type="GO" id="GO:0005737">
    <property type="term" value="C:cytoplasm"/>
    <property type="evidence" value="ECO:0007669"/>
    <property type="project" value="UniProtKB-SubCell"/>
</dbReference>
<dbReference type="GO" id="GO:0005506">
    <property type="term" value="F:iron ion binding"/>
    <property type="evidence" value="ECO:0007669"/>
    <property type="project" value="UniProtKB-UniRule"/>
</dbReference>
<dbReference type="GO" id="GO:0061711">
    <property type="term" value="F:N(6)-L-threonylcarbamoyladenine synthase activity"/>
    <property type="evidence" value="ECO:0007669"/>
    <property type="project" value="UniProtKB-EC"/>
</dbReference>
<dbReference type="GO" id="GO:0002949">
    <property type="term" value="P:tRNA threonylcarbamoyladenosine modification"/>
    <property type="evidence" value="ECO:0007669"/>
    <property type="project" value="UniProtKB-UniRule"/>
</dbReference>
<dbReference type="CDD" id="cd24133">
    <property type="entry name" value="ASKHA_NBD_TsaD_bac"/>
    <property type="match status" value="1"/>
</dbReference>
<dbReference type="FunFam" id="3.30.420.40:FF:000040">
    <property type="entry name" value="tRNA N6-adenosine threonylcarbamoyltransferase"/>
    <property type="match status" value="1"/>
</dbReference>
<dbReference type="Gene3D" id="3.30.420.40">
    <property type="match status" value="2"/>
</dbReference>
<dbReference type="HAMAP" id="MF_01445">
    <property type="entry name" value="TsaD"/>
    <property type="match status" value="1"/>
</dbReference>
<dbReference type="InterPro" id="IPR043129">
    <property type="entry name" value="ATPase_NBD"/>
</dbReference>
<dbReference type="InterPro" id="IPR000905">
    <property type="entry name" value="Gcp-like_dom"/>
</dbReference>
<dbReference type="InterPro" id="IPR017861">
    <property type="entry name" value="KAE1/TsaD"/>
</dbReference>
<dbReference type="InterPro" id="IPR022450">
    <property type="entry name" value="TsaD"/>
</dbReference>
<dbReference type="NCBIfam" id="TIGR00329">
    <property type="entry name" value="gcp_kae1"/>
    <property type="match status" value="1"/>
</dbReference>
<dbReference type="NCBIfam" id="TIGR03723">
    <property type="entry name" value="T6A_TsaD_YgjD"/>
    <property type="match status" value="1"/>
</dbReference>
<dbReference type="PANTHER" id="PTHR11735">
    <property type="entry name" value="TRNA N6-ADENOSINE THREONYLCARBAMOYLTRANSFERASE"/>
    <property type="match status" value="1"/>
</dbReference>
<dbReference type="PANTHER" id="PTHR11735:SF6">
    <property type="entry name" value="TRNA N6-ADENOSINE THREONYLCARBAMOYLTRANSFERASE, MITOCHONDRIAL"/>
    <property type="match status" value="1"/>
</dbReference>
<dbReference type="Pfam" id="PF00814">
    <property type="entry name" value="TsaD"/>
    <property type="match status" value="1"/>
</dbReference>
<dbReference type="PRINTS" id="PR00789">
    <property type="entry name" value="OSIALOPTASE"/>
</dbReference>
<dbReference type="SUPFAM" id="SSF53067">
    <property type="entry name" value="Actin-like ATPase domain"/>
    <property type="match status" value="2"/>
</dbReference>
<reference key="1">
    <citation type="submission" date="2003-03" db="EMBL/GenBank/DDBJ databases">
        <title>The complete genome sequence of Neisseria gonorrhoeae.</title>
        <authorList>
            <person name="Lewis L.A."/>
            <person name="Gillaspy A.F."/>
            <person name="McLaughlin R.E."/>
            <person name="Gipson M."/>
            <person name="Ducey T.F."/>
            <person name="Ownbey T."/>
            <person name="Hartman K."/>
            <person name="Nydick C."/>
            <person name="Carson M.B."/>
            <person name="Vaughn J."/>
            <person name="Thomson C."/>
            <person name="Song L."/>
            <person name="Lin S."/>
            <person name="Yuan X."/>
            <person name="Najar F."/>
            <person name="Zhan M."/>
            <person name="Ren Q."/>
            <person name="Zhu H."/>
            <person name="Qi S."/>
            <person name="Kenton S.M."/>
            <person name="Lai H."/>
            <person name="White J.D."/>
            <person name="Clifton S."/>
            <person name="Roe B.A."/>
            <person name="Dyer D.W."/>
        </authorList>
    </citation>
    <scope>NUCLEOTIDE SEQUENCE [LARGE SCALE GENOMIC DNA]</scope>
    <source>
        <strain>ATCC 700825 / FA 1090</strain>
    </source>
</reference>
<feature type="chain" id="PRO_0000303447" description="tRNA N6-adenosine threonylcarbamoyltransferase">
    <location>
        <begin position="1"/>
        <end position="354"/>
    </location>
</feature>
<feature type="binding site" evidence="1">
    <location>
        <position position="111"/>
    </location>
    <ligand>
        <name>Fe cation</name>
        <dbReference type="ChEBI" id="CHEBI:24875"/>
    </ligand>
</feature>
<feature type="binding site" evidence="1">
    <location>
        <position position="115"/>
    </location>
    <ligand>
        <name>Fe cation</name>
        <dbReference type="ChEBI" id="CHEBI:24875"/>
    </ligand>
</feature>
<feature type="binding site" evidence="1">
    <location>
        <begin position="134"/>
        <end position="138"/>
    </location>
    <ligand>
        <name>substrate</name>
    </ligand>
</feature>
<feature type="binding site" evidence="1">
    <location>
        <position position="167"/>
    </location>
    <ligand>
        <name>substrate</name>
    </ligand>
</feature>
<feature type="binding site" evidence="1">
    <location>
        <position position="180"/>
    </location>
    <ligand>
        <name>substrate</name>
    </ligand>
</feature>
<feature type="binding site" evidence="1">
    <location>
        <position position="279"/>
    </location>
    <ligand>
        <name>substrate</name>
    </ligand>
</feature>
<feature type="binding site" evidence="1">
    <location>
        <position position="319"/>
    </location>
    <ligand>
        <name>Fe cation</name>
        <dbReference type="ChEBI" id="CHEBI:24875"/>
    </ligand>
</feature>
<keyword id="KW-0012">Acyltransferase</keyword>
<keyword id="KW-0963">Cytoplasm</keyword>
<keyword id="KW-0408">Iron</keyword>
<keyword id="KW-0479">Metal-binding</keyword>
<keyword id="KW-1185">Reference proteome</keyword>
<keyword id="KW-0808">Transferase</keyword>
<keyword id="KW-0819">tRNA processing</keyword>
<gene>
    <name evidence="1" type="primary">tsaD</name>
    <name type="synonym">gcp</name>
    <name type="ordered locus">NGO_0104</name>
</gene>
<name>TSAD_NEIG1</name>
<sequence length="354" mass="37683">MLVLGIESSCDETGVALYDTERGLRSHCLHTQMAMHAEYGGVVPELASRDHIRRLVPLTEGCLAQAGASYGDIDAVAFTQGPGLGGALLAGSSYANALALALDKPVIPVHHLEGHLLSPLLAEEKPDFPFVALLVSGGHTQIMAVRGIGDYELLGESVDDAAGEAFDKTAKLLGLPYPGGAKLSELAESGRPEAFVFPRPMIHSDDLQMSFSGLKTAVLTAVEKVREANGSETIPEQTRNNICRAFQDAVVEVLEAKVKKALLQTGFRTVVVAGGVGANRKLRETFGNMTVQIPTPKGKPKHPSEKVSVFFPPMAYCTDNGAMIAFAGAMHLGKGREVGAFNVRPRWSLSEIVK</sequence>
<evidence type="ECO:0000255" key="1">
    <source>
        <dbReference type="HAMAP-Rule" id="MF_01445"/>
    </source>
</evidence>
<accession>Q5FAC2</accession>
<proteinExistence type="inferred from homology"/>
<protein>
    <recommendedName>
        <fullName evidence="1">tRNA N6-adenosine threonylcarbamoyltransferase</fullName>
        <ecNumber evidence="1">2.3.1.234</ecNumber>
    </recommendedName>
    <alternativeName>
        <fullName evidence="1">N6-L-threonylcarbamoyladenine synthase</fullName>
        <shortName evidence="1">t(6)A synthase</shortName>
    </alternativeName>
    <alternativeName>
        <fullName evidence="1">t(6)A37 threonylcarbamoyladenosine biosynthesis protein TsaD</fullName>
    </alternativeName>
    <alternativeName>
        <fullName evidence="1">tRNA threonylcarbamoyladenosine biosynthesis protein TsaD</fullName>
    </alternativeName>
</protein>
<organism>
    <name type="scientific">Neisseria gonorrhoeae (strain ATCC 700825 / FA 1090)</name>
    <dbReference type="NCBI Taxonomy" id="242231"/>
    <lineage>
        <taxon>Bacteria</taxon>
        <taxon>Pseudomonadati</taxon>
        <taxon>Pseudomonadota</taxon>
        <taxon>Betaproteobacteria</taxon>
        <taxon>Neisseriales</taxon>
        <taxon>Neisseriaceae</taxon>
        <taxon>Neisseria</taxon>
    </lineage>
</organism>
<comment type="function">
    <text evidence="1">Required for the formation of a threonylcarbamoyl group on adenosine at position 37 (t(6)A37) in tRNAs that read codons beginning with adenine. Is involved in the transfer of the threonylcarbamoyl moiety of threonylcarbamoyl-AMP (TC-AMP) to the N6 group of A37, together with TsaE and TsaB. TsaD likely plays a direct catalytic role in this reaction.</text>
</comment>
<comment type="catalytic activity">
    <reaction evidence="1">
        <text>L-threonylcarbamoyladenylate + adenosine(37) in tRNA = N(6)-L-threonylcarbamoyladenosine(37) in tRNA + AMP + H(+)</text>
        <dbReference type="Rhea" id="RHEA:37059"/>
        <dbReference type="Rhea" id="RHEA-COMP:10162"/>
        <dbReference type="Rhea" id="RHEA-COMP:10163"/>
        <dbReference type="ChEBI" id="CHEBI:15378"/>
        <dbReference type="ChEBI" id="CHEBI:73682"/>
        <dbReference type="ChEBI" id="CHEBI:74411"/>
        <dbReference type="ChEBI" id="CHEBI:74418"/>
        <dbReference type="ChEBI" id="CHEBI:456215"/>
        <dbReference type="EC" id="2.3.1.234"/>
    </reaction>
</comment>
<comment type="cofactor">
    <cofactor evidence="1">
        <name>Fe(2+)</name>
        <dbReference type="ChEBI" id="CHEBI:29033"/>
    </cofactor>
    <text evidence="1">Binds 1 Fe(2+) ion per subunit.</text>
</comment>
<comment type="subcellular location">
    <subcellularLocation>
        <location evidence="1">Cytoplasm</location>
    </subcellularLocation>
</comment>
<comment type="similarity">
    <text evidence="1">Belongs to the KAE1 / TsaD family.</text>
</comment>